<proteinExistence type="evidence at transcript level"/>
<dbReference type="EMBL" id="AF017366">
    <property type="protein sequence ID" value="AAB70546.1"/>
    <property type="molecule type" value="mRNA"/>
</dbReference>
<dbReference type="EMBL" id="AY491534">
    <property type="protein sequence ID" value="AAR85965.1"/>
    <property type="molecule type" value="mRNA"/>
</dbReference>
<dbReference type="EMBL" id="CM000136">
    <property type="protein sequence ID" value="EAY81904.1"/>
    <property type="molecule type" value="Genomic_DNA"/>
</dbReference>
<dbReference type="EMBL" id="EF575936">
    <property type="protein sequence ID" value="ABR25524.1"/>
    <property type="molecule type" value="mRNA"/>
</dbReference>
<dbReference type="STRING" id="39946.A2ZH20"/>
<dbReference type="EnsemblPlants" id="BGIOSGA035740-TA">
    <property type="protein sequence ID" value="BGIOSGA035740-PA"/>
    <property type="gene ID" value="BGIOSGA035740"/>
</dbReference>
<dbReference type="EnsemblPlants" id="OsGoSa_11g0024530.01">
    <property type="protein sequence ID" value="OsGoSa_11g0024530.01"/>
    <property type="gene ID" value="OsGoSa_11g0024530"/>
</dbReference>
<dbReference type="EnsemblPlants" id="OsIR64_11g0025280.01">
    <property type="protein sequence ID" value="OsIR64_11g0025280.01"/>
    <property type="gene ID" value="OsIR64_11g0025280"/>
</dbReference>
<dbReference type="EnsemblPlants" id="OsKYG_11g0025180.01">
    <property type="protein sequence ID" value="OsKYG_11g0025180.01"/>
    <property type="gene ID" value="OsKYG_11g0025180"/>
</dbReference>
<dbReference type="EnsemblPlants" id="OsLaMu_11g0024690.01">
    <property type="protein sequence ID" value="OsLaMu_11g0024690.01"/>
    <property type="gene ID" value="OsLaMu_11g0024690"/>
</dbReference>
<dbReference type="EnsemblPlants" id="OsLiXu_11g0024240.01">
    <property type="protein sequence ID" value="OsLiXu_11g0024240.01"/>
    <property type="gene ID" value="OsLiXu_11g0024240"/>
</dbReference>
<dbReference type="EnsemblPlants" id="OsMH63_11G026430_01">
    <property type="protein sequence ID" value="OsMH63_11G026430_01"/>
    <property type="gene ID" value="OsMH63_11G026430"/>
</dbReference>
<dbReference type="EnsemblPlants" id="OsPr106_11g0024750.01">
    <property type="protein sequence ID" value="OsPr106_11g0024750.01"/>
    <property type="gene ID" value="OsPr106_11g0024750"/>
</dbReference>
<dbReference type="EnsemblPlants" id="OsZS97_11G024610_01">
    <property type="protein sequence ID" value="OsZS97_11G024610_01"/>
    <property type="gene ID" value="OsZS97_11G024610"/>
</dbReference>
<dbReference type="Gramene" id="BGIOSGA035740-TA">
    <property type="protein sequence ID" value="BGIOSGA035740-PA"/>
    <property type="gene ID" value="BGIOSGA035740"/>
</dbReference>
<dbReference type="Gramene" id="OsGoSa_11g0024530.01">
    <property type="protein sequence ID" value="OsGoSa_11g0024530.01"/>
    <property type="gene ID" value="OsGoSa_11g0024530"/>
</dbReference>
<dbReference type="Gramene" id="OsIR64_11g0025280.01">
    <property type="protein sequence ID" value="OsIR64_11g0025280.01"/>
    <property type="gene ID" value="OsIR64_11g0025280"/>
</dbReference>
<dbReference type="Gramene" id="OsKYG_11g0025180.01">
    <property type="protein sequence ID" value="OsKYG_11g0025180.01"/>
    <property type="gene ID" value="OsKYG_11g0025180"/>
</dbReference>
<dbReference type="Gramene" id="OsLaMu_11g0024690.01">
    <property type="protein sequence ID" value="OsLaMu_11g0024690.01"/>
    <property type="gene ID" value="OsLaMu_11g0024690"/>
</dbReference>
<dbReference type="Gramene" id="OsLiXu_11g0024240.01">
    <property type="protein sequence ID" value="OsLiXu_11g0024240.01"/>
    <property type="gene ID" value="OsLiXu_11g0024240"/>
</dbReference>
<dbReference type="Gramene" id="OsMH63_11G026430_01">
    <property type="protein sequence ID" value="OsMH63_11G026430_01"/>
    <property type="gene ID" value="OsMH63_11G026430"/>
</dbReference>
<dbReference type="Gramene" id="OsPr106_11g0024750.01">
    <property type="protein sequence ID" value="OsPr106_11g0024750.01"/>
    <property type="gene ID" value="OsPr106_11g0024750"/>
</dbReference>
<dbReference type="Gramene" id="OsZS97_11G024610_01">
    <property type="protein sequence ID" value="OsZS97_11G024610_01"/>
    <property type="gene ID" value="OsZS97_11G024610"/>
</dbReference>
<dbReference type="HOGENOM" id="CLU_161105_0_1_1"/>
<dbReference type="Proteomes" id="UP000007015">
    <property type="component" value="Chromosome 11"/>
</dbReference>
<dbReference type="ExpressionAtlas" id="A2ZH20">
    <property type="expression patterns" value="differential"/>
</dbReference>
<dbReference type="GO" id="GO:0046872">
    <property type="term" value="F:metal ion binding"/>
    <property type="evidence" value="ECO:0007669"/>
    <property type="project" value="UniProtKB-KW"/>
</dbReference>
<dbReference type="InterPro" id="IPR000347">
    <property type="entry name" value="Metalthion_15p"/>
</dbReference>
<dbReference type="PANTHER" id="PTHR33543:SF15">
    <property type="entry name" value="METALLOTHIONEIN-LIKE PROTEIN 1A"/>
    <property type="match status" value="1"/>
</dbReference>
<dbReference type="PANTHER" id="PTHR33543">
    <property type="entry name" value="METALLOTHIONEIN-LIKE PROTEIN 2A"/>
    <property type="match status" value="1"/>
</dbReference>
<dbReference type="Pfam" id="PF01439">
    <property type="entry name" value="Metallothio_2"/>
    <property type="match status" value="1"/>
</dbReference>
<reference key="1">
    <citation type="online journal article" date="1999" name="Plant Gene Register">
        <title>Nucleotide sequences of cDNAs encoding three types of metallothionein(MT)-like protein from Oryza sativa L.</title>
        <authorList>
            <person name="Kim Y.H."/>
            <person name="Lee M.C."/>
            <person name="Yun D.W."/>
            <person name="Eun M.Y."/>
        </authorList>
        <locator>PGR99-019</locator>
    </citation>
    <scope>NUCLEOTIDE SEQUENCE [MRNA]</scope>
    <source>
        <strain>cv. Milyang 23</strain>
        <tissue>Immature seed</tissue>
    </source>
</reference>
<reference key="2">
    <citation type="submission" date="2003-11" db="EMBL/GenBank/DDBJ databases">
        <title>Isolation of rice genes regulated by SA.</title>
        <authorList>
            <person name="Yu T."/>
            <person name="Zhu Y."/>
        </authorList>
    </citation>
    <scope>NUCLEOTIDE SEQUENCE [MRNA]</scope>
    <source>
        <strain>cv. 93-11</strain>
    </source>
</reference>
<reference key="3">
    <citation type="journal article" date="2005" name="PLoS Biol.">
        <title>The genomes of Oryza sativa: a history of duplications.</title>
        <authorList>
            <person name="Yu J."/>
            <person name="Wang J."/>
            <person name="Lin W."/>
            <person name="Li S."/>
            <person name="Li H."/>
            <person name="Zhou J."/>
            <person name="Ni P."/>
            <person name="Dong W."/>
            <person name="Hu S."/>
            <person name="Zeng C."/>
            <person name="Zhang J."/>
            <person name="Zhang Y."/>
            <person name="Li R."/>
            <person name="Xu Z."/>
            <person name="Li S."/>
            <person name="Li X."/>
            <person name="Zheng H."/>
            <person name="Cong L."/>
            <person name="Lin L."/>
            <person name="Yin J."/>
            <person name="Geng J."/>
            <person name="Li G."/>
            <person name="Shi J."/>
            <person name="Liu J."/>
            <person name="Lv H."/>
            <person name="Li J."/>
            <person name="Wang J."/>
            <person name="Deng Y."/>
            <person name="Ran L."/>
            <person name="Shi X."/>
            <person name="Wang X."/>
            <person name="Wu Q."/>
            <person name="Li C."/>
            <person name="Ren X."/>
            <person name="Wang J."/>
            <person name="Wang X."/>
            <person name="Li D."/>
            <person name="Liu D."/>
            <person name="Zhang X."/>
            <person name="Ji Z."/>
            <person name="Zhao W."/>
            <person name="Sun Y."/>
            <person name="Zhang Z."/>
            <person name="Bao J."/>
            <person name="Han Y."/>
            <person name="Dong L."/>
            <person name="Ji J."/>
            <person name="Chen P."/>
            <person name="Wu S."/>
            <person name="Liu J."/>
            <person name="Xiao Y."/>
            <person name="Bu D."/>
            <person name="Tan J."/>
            <person name="Yang L."/>
            <person name="Ye C."/>
            <person name="Zhang J."/>
            <person name="Xu J."/>
            <person name="Zhou Y."/>
            <person name="Yu Y."/>
            <person name="Zhang B."/>
            <person name="Zhuang S."/>
            <person name="Wei H."/>
            <person name="Liu B."/>
            <person name="Lei M."/>
            <person name="Yu H."/>
            <person name="Li Y."/>
            <person name="Xu H."/>
            <person name="Wei S."/>
            <person name="He X."/>
            <person name="Fang L."/>
            <person name="Zhang Z."/>
            <person name="Zhang Y."/>
            <person name="Huang X."/>
            <person name="Su Z."/>
            <person name="Tong W."/>
            <person name="Li J."/>
            <person name="Tong Z."/>
            <person name="Li S."/>
            <person name="Ye J."/>
            <person name="Wang L."/>
            <person name="Fang L."/>
            <person name="Lei T."/>
            <person name="Chen C.-S."/>
            <person name="Chen H.-C."/>
            <person name="Xu Z."/>
            <person name="Li H."/>
            <person name="Huang H."/>
            <person name="Zhang F."/>
            <person name="Xu H."/>
            <person name="Li N."/>
            <person name="Zhao C."/>
            <person name="Li S."/>
            <person name="Dong L."/>
            <person name="Huang Y."/>
            <person name="Li L."/>
            <person name="Xi Y."/>
            <person name="Qi Q."/>
            <person name="Li W."/>
            <person name="Zhang B."/>
            <person name="Hu W."/>
            <person name="Zhang Y."/>
            <person name="Tian X."/>
            <person name="Jiao Y."/>
            <person name="Liang X."/>
            <person name="Jin J."/>
            <person name="Gao L."/>
            <person name="Zheng W."/>
            <person name="Hao B."/>
            <person name="Liu S.-M."/>
            <person name="Wang W."/>
            <person name="Yuan L."/>
            <person name="Cao M."/>
            <person name="McDermott J."/>
            <person name="Samudrala R."/>
            <person name="Wang J."/>
            <person name="Wong G.K.-S."/>
            <person name="Yang H."/>
        </authorList>
    </citation>
    <scope>NUCLEOTIDE SEQUENCE [LARGE SCALE GENOMIC DNA]</scope>
    <source>
        <strain>cv. 93-11</strain>
    </source>
</reference>
<reference key="4">
    <citation type="submission" date="2007-04" db="EMBL/GenBank/DDBJ databases">
        <title>A comparative transcriptome map of early and late salinity stress responses in contrasting genotypes of Oryza sativa L.</title>
        <authorList>
            <person name="Kumari S."/>
            <person name="Panjabi V."/>
            <person name="Singla-Pareek S.L."/>
            <person name="Sopory S.K."/>
            <person name="Pareek A."/>
        </authorList>
    </citation>
    <scope>NUCLEOTIDE SEQUENCE [LARGE SCALE MRNA]</scope>
</reference>
<reference key="5">
    <citation type="journal article" date="2006" name="J. Biochem. Mol. Biol.">
        <title>Molecular analyses of the metallothionein gene family in rice (Oryza sativa L.).</title>
        <authorList>
            <person name="Zhou G."/>
            <person name="Xu Y."/>
            <person name="Li J."/>
            <person name="Yang L."/>
            <person name="Liu J.-Y."/>
        </authorList>
    </citation>
    <scope>GENE FAMILY</scope>
</reference>
<reference key="6">
    <citation type="journal article" date="2013" name="Protein J.">
        <title>Heterologous expression and metal-binding characterization of a type 1 metallothionein isoform (OsMTI-1b) from rice (Oryza sativa).</title>
        <authorList>
            <person name="Nezhad R.M."/>
            <person name="Shahpiri A."/>
            <person name="Mirlohi A."/>
        </authorList>
    </citation>
    <scope>FUNCTION</scope>
    <scope>INDUCTION</scope>
    <source>
        <strain>cv. Pokkali</strain>
    </source>
</reference>
<keyword id="KW-0479">Metal-binding</keyword>
<keyword id="KW-0480">Metal-thiolate cluster</keyword>
<keyword id="KW-1185">Reference proteome</keyword>
<keyword id="KW-0346">Stress response</keyword>
<evidence type="ECO:0000269" key="1">
    <source>
    </source>
</evidence>
<evidence type="ECO:0000305" key="2"/>
<gene>
    <name type="primary">ERR26</name>
    <name type="synonym">MT-1</name>
    <name type="synonym">MT1A</name>
    <name type="synonym">RGMT-1</name>
    <name type="ORF">OsI_035863</name>
</gene>
<comment type="function">
    <text evidence="1 2">Metallothioneins have a high content of cysteine residues that bind various heavy metals (Probable). May be involved in ROS homeostasis. May act as reactive oxygen species (ROS) scavenger in response to salt stress (PubMed:23385446).</text>
</comment>
<comment type="induction">
    <text evidence="1">Down-regulated by salt stress.</text>
</comment>
<comment type="similarity">
    <text evidence="2">Belongs to the metallothionein superfamily. Type 15 family.</text>
</comment>
<feature type="chain" id="PRO_0000296353" description="Metallothionein-like protein 1A">
    <location>
        <begin position="1"/>
        <end position="74"/>
    </location>
</feature>
<feature type="sequence conflict" description="In Ref. 1; AAB70546." evidence="2" ref="1">
    <original>V</original>
    <variation>A</variation>
    <location>
        <position position="35"/>
    </location>
</feature>
<feature type="sequence conflict" description="In Ref. 1; AAB70546." evidence="2" ref="1">
    <original>Q</original>
    <variation>H</variation>
    <location>
        <position position="47"/>
    </location>
</feature>
<feature type="sequence conflict" description="In Ref. 2; AAR85965." evidence="2" ref="2">
    <original>S</original>
    <variation>C</variation>
    <location>
        <position position="66"/>
    </location>
</feature>
<accession>A2ZH20</accession>
<accession>O04739</accession>
<accession>O22489</accession>
<accession>Q40633</accession>
<accession>Q53MA9</accession>
<accession>Q53NN5</accession>
<accession>Q53WW8</accession>
<accession>Q6RUN8</accession>
<protein>
    <recommendedName>
        <fullName>Metallothionein-like protein 1A</fullName>
    </recommendedName>
    <alternativeName>
        <fullName>Class I metallothionein-like protein 1A</fullName>
    </alternativeName>
    <alternativeName>
        <fullName>OsMT-I-1a</fullName>
        <shortName>OsMT1a</shortName>
    </alternativeName>
</protein>
<organism>
    <name type="scientific">Oryza sativa subsp. indica</name>
    <name type="common">Rice</name>
    <dbReference type="NCBI Taxonomy" id="39946"/>
    <lineage>
        <taxon>Eukaryota</taxon>
        <taxon>Viridiplantae</taxon>
        <taxon>Streptophyta</taxon>
        <taxon>Embryophyta</taxon>
        <taxon>Tracheophyta</taxon>
        <taxon>Spermatophyta</taxon>
        <taxon>Magnoliopsida</taxon>
        <taxon>Liliopsida</taxon>
        <taxon>Poales</taxon>
        <taxon>Poaceae</taxon>
        <taxon>BOP clade</taxon>
        <taxon>Oryzoideae</taxon>
        <taxon>Oryzeae</taxon>
        <taxon>Oryzinae</taxon>
        <taxon>Oryza</taxon>
        <taxon>Oryza sativa</taxon>
    </lineage>
</organism>
<name>MT1A_ORYSI</name>
<sequence>MSCSCGSSCSCGSNCSCGKKYPDLEEKSSSTKATVVLGVAPEKKAQQFEAAAESGETAHGCSCGSSCRCNPCNC</sequence>